<organism>
    <name type="scientific">Rattus norvegicus</name>
    <name type="common">Rat</name>
    <dbReference type="NCBI Taxonomy" id="10116"/>
    <lineage>
        <taxon>Eukaryota</taxon>
        <taxon>Metazoa</taxon>
        <taxon>Chordata</taxon>
        <taxon>Craniata</taxon>
        <taxon>Vertebrata</taxon>
        <taxon>Euteleostomi</taxon>
        <taxon>Mammalia</taxon>
        <taxon>Eutheria</taxon>
        <taxon>Euarchontoglires</taxon>
        <taxon>Glires</taxon>
        <taxon>Rodentia</taxon>
        <taxon>Myomorpha</taxon>
        <taxon>Muroidea</taxon>
        <taxon>Muridae</taxon>
        <taxon>Murinae</taxon>
        <taxon>Rattus</taxon>
    </lineage>
</organism>
<sequence>MVSVQKVPAIVLCSGVSLALLHVLCLATCLNESPGQNSKDEKLCPENFTRILDSLLDGYDNRLRPGFGGPVTEVKTDIYVTSFGPVSDVEMEYTMDVFFRQTWIDKRLKYDGPIEILRLNNMMVTKVWTPDTFFRNGKKSVSHNMTAPNKLFRIMRNGTILYTMRLTISAECPMRLVDFPMDGHACPLKFGSYAYPKSEMIYTWTKGPEKSVEVPKESSSLVQYDLIGQTVSSETIKSITGEYIVMTVYFHLRRKMGYFMIQTYIPCIMTVILSQVSFWINKESVPARTVFGITTVLTMTTLSISARHSLPKVSYATAMDWFIAVCFAFVFSALIEFAAVNYFTNIQMQKAKKKISKPPPEVPAAPVLKEKHTETSLQNTHANLNMRKRTNALVHSESDVNSRTEVGNHSSKTTAAQESSETTPKAHLASSPNPFSRANAAETISAAARGLSSAASPSPHGTLQPAPLRSASARPAFGARLGRIKTTVNTTGVPGNVSATPPPSAPPPSGSGTSKIDKYARILFPVTFGAFNMVYWVVYLSKDTMEKSESLM</sequence>
<dbReference type="EMBL" id="L08493">
    <property type="protein sequence ID" value="AAC42032.1"/>
    <property type="molecule type" value="Genomic_DNA"/>
</dbReference>
<dbReference type="EMBL" id="S55933">
    <property type="protein sequence ID" value="AAB19902.1"/>
    <property type="molecule type" value="mRNA"/>
</dbReference>
<dbReference type="PIR" id="S17551">
    <property type="entry name" value="S17551"/>
</dbReference>
<dbReference type="RefSeq" id="NP_542154.3">
    <property type="nucleotide sequence ID" value="NM_080587.3"/>
</dbReference>
<dbReference type="SMR" id="P28471"/>
<dbReference type="BioGRID" id="250834">
    <property type="interactions" value="1"/>
</dbReference>
<dbReference type="ComplexPortal" id="CPX-280">
    <property type="entry name" value="GABA-A receptor, alpha-4/beta-3/delta"/>
</dbReference>
<dbReference type="ComplexPortal" id="CPX-408">
    <property type="entry name" value="GABA-A receptor, alpha4-beta2-delta"/>
</dbReference>
<dbReference type="CORUM" id="P28471"/>
<dbReference type="FunCoup" id="P28471">
    <property type="interactions" value="741"/>
</dbReference>
<dbReference type="IntAct" id="P28471">
    <property type="interactions" value="2"/>
</dbReference>
<dbReference type="STRING" id="10116.ENSRNOP00000003191"/>
<dbReference type="BindingDB" id="P28471"/>
<dbReference type="ChEMBL" id="CHEMBL292"/>
<dbReference type="DrugCentral" id="P28471"/>
<dbReference type="GuidetoPHARMACOLOGY" id="407"/>
<dbReference type="GlyCosmos" id="P28471">
    <property type="glycosylation" value="3 sites, 2 glycans"/>
</dbReference>
<dbReference type="GlyGen" id="P28471">
    <property type="glycosylation" value="3 sites, 2 N-linked glycans (1 site)"/>
</dbReference>
<dbReference type="iPTMnet" id="P28471"/>
<dbReference type="PhosphoSitePlus" id="P28471"/>
<dbReference type="PaxDb" id="10116-ENSRNOP00000003191"/>
<dbReference type="ABCD" id="P28471">
    <property type="antibodies" value="1 sequenced antibody"/>
</dbReference>
<dbReference type="Ensembl" id="ENSRNOT00000003191.7">
    <property type="protein sequence ID" value="ENSRNOP00000003191.5"/>
    <property type="gene ID" value="ENSRNOG00000002336.7"/>
</dbReference>
<dbReference type="GeneID" id="140675"/>
<dbReference type="KEGG" id="rno:140675"/>
<dbReference type="UCSC" id="RGD:621670">
    <property type="organism name" value="rat"/>
</dbReference>
<dbReference type="AGR" id="RGD:621670"/>
<dbReference type="CTD" id="2557"/>
<dbReference type="RGD" id="621670">
    <property type="gene designation" value="Gabra4"/>
</dbReference>
<dbReference type="eggNOG" id="KOG3642">
    <property type="taxonomic scope" value="Eukaryota"/>
</dbReference>
<dbReference type="GeneTree" id="ENSGT00940000159024"/>
<dbReference type="HOGENOM" id="CLU_010920_1_6_1"/>
<dbReference type="InParanoid" id="P28471"/>
<dbReference type="OMA" id="FFCLTTC"/>
<dbReference type="OrthoDB" id="55220at9989"/>
<dbReference type="Reactome" id="R-RNO-977443">
    <property type="pathway name" value="GABA receptor activation"/>
</dbReference>
<dbReference type="PRO" id="PR:P28471"/>
<dbReference type="Proteomes" id="UP000002494">
    <property type="component" value="Chromosome 14"/>
</dbReference>
<dbReference type="Bgee" id="ENSRNOG00000002336">
    <property type="expression patterns" value="Expressed in frontal cortex and 3 other cell types or tissues"/>
</dbReference>
<dbReference type="GO" id="GO:0034707">
    <property type="term" value="C:chloride channel complex"/>
    <property type="evidence" value="ECO:0007669"/>
    <property type="project" value="UniProtKB-KW"/>
</dbReference>
<dbReference type="GO" id="GO:0032590">
    <property type="term" value="C:dendrite membrane"/>
    <property type="evidence" value="ECO:0000318"/>
    <property type="project" value="GO_Central"/>
</dbReference>
<dbReference type="GO" id="GO:1902711">
    <property type="term" value="C:GABA-A receptor complex"/>
    <property type="evidence" value="ECO:0000353"/>
    <property type="project" value="ComplexPortal"/>
</dbReference>
<dbReference type="GO" id="GO:0098982">
    <property type="term" value="C:GABA-ergic synapse"/>
    <property type="evidence" value="ECO:0000314"/>
    <property type="project" value="SynGO"/>
</dbReference>
<dbReference type="GO" id="GO:0098794">
    <property type="term" value="C:postsynapse"/>
    <property type="evidence" value="ECO:0000318"/>
    <property type="project" value="GO_Central"/>
</dbReference>
<dbReference type="GO" id="GO:0099634">
    <property type="term" value="C:postsynaptic specialization membrane"/>
    <property type="evidence" value="ECO:0000314"/>
    <property type="project" value="SynGO"/>
</dbReference>
<dbReference type="GO" id="GO:0004890">
    <property type="term" value="F:GABA-A receptor activity"/>
    <property type="evidence" value="ECO:0000304"/>
    <property type="project" value="RGD"/>
</dbReference>
<dbReference type="GO" id="GO:0022851">
    <property type="term" value="F:GABA-gated chloride ion channel activity"/>
    <property type="evidence" value="ECO:0000318"/>
    <property type="project" value="GO_Central"/>
</dbReference>
<dbReference type="GO" id="GO:1904315">
    <property type="term" value="F:transmitter-gated monoatomic ion channel activity involved in regulation of postsynaptic membrane potential"/>
    <property type="evidence" value="ECO:0000314"/>
    <property type="project" value="SynGO"/>
</dbReference>
<dbReference type="GO" id="GO:0007417">
    <property type="term" value="P:central nervous system development"/>
    <property type="evidence" value="ECO:0000266"/>
    <property type="project" value="RGD"/>
</dbReference>
<dbReference type="GO" id="GO:1902476">
    <property type="term" value="P:chloride transmembrane transport"/>
    <property type="evidence" value="ECO:0000266"/>
    <property type="project" value="RGD"/>
</dbReference>
<dbReference type="GO" id="GO:0007214">
    <property type="term" value="P:gamma-aminobutyric acid signaling pathway"/>
    <property type="evidence" value="ECO:0000266"/>
    <property type="project" value="RGD"/>
</dbReference>
<dbReference type="GO" id="GO:1904862">
    <property type="term" value="P:inhibitory synapse assembly"/>
    <property type="evidence" value="ECO:0000318"/>
    <property type="project" value="GO_Central"/>
</dbReference>
<dbReference type="GO" id="GO:0051932">
    <property type="term" value="P:synaptic transmission, GABAergic"/>
    <property type="evidence" value="ECO:0000318"/>
    <property type="project" value="GO_Central"/>
</dbReference>
<dbReference type="CDD" id="cd19037">
    <property type="entry name" value="LGIC_ECD_GABAAR_A4"/>
    <property type="match status" value="1"/>
</dbReference>
<dbReference type="CDD" id="cd19052">
    <property type="entry name" value="LGIC_TM_GABAAR_alpha"/>
    <property type="match status" value="1"/>
</dbReference>
<dbReference type="FunFam" id="2.70.170.10:FF:000001">
    <property type="entry name" value="Gamma-aminobutyric acid A receptor subunit alpha-2"/>
    <property type="match status" value="1"/>
</dbReference>
<dbReference type="FunFam" id="1.20.58.390:FF:000002">
    <property type="entry name" value="Putative gamma-aminobutyric acid receptor subunit alpha-5"/>
    <property type="match status" value="1"/>
</dbReference>
<dbReference type="Gene3D" id="2.70.170.10">
    <property type="entry name" value="Neurotransmitter-gated ion-channel ligand-binding domain"/>
    <property type="match status" value="1"/>
</dbReference>
<dbReference type="Gene3D" id="1.20.58.390">
    <property type="entry name" value="Neurotransmitter-gated ion-channel transmembrane domain"/>
    <property type="match status" value="1"/>
</dbReference>
<dbReference type="InterPro" id="IPR006028">
    <property type="entry name" value="GABAA/Glycine_rcpt"/>
</dbReference>
<dbReference type="InterPro" id="IPR001390">
    <property type="entry name" value="GABAAa_rcpt"/>
</dbReference>
<dbReference type="InterPro" id="IPR005434">
    <property type="entry name" value="GABBAa4_rcpt"/>
</dbReference>
<dbReference type="InterPro" id="IPR047024">
    <property type="entry name" value="Gabra-1-6_TM"/>
</dbReference>
<dbReference type="InterPro" id="IPR006202">
    <property type="entry name" value="Neur_chan_lig-bd"/>
</dbReference>
<dbReference type="InterPro" id="IPR036734">
    <property type="entry name" value="Neur_chan_lig-bd_sf"/>
</dbReference>
<dbReference type="InterPro" id="IPR006201">
    <property type="entry name" value="Neur_channel"/>
</dbReference>
<dbReference type="InterPro" id="IPR036719">
    <property type="entry name" value="Neuro-gated_channel_TM_sf"/>
</dbReference>
<dbReference type="InterPro" id="IPR038050">
    <property type="entry name" value="Neuro_actylchol_rec"/>
</dbReference>
<dbReference type="InterPro" id="IPR006029">
    <property type="entry name" value="Neurotrans-gated_channel_TM"/>
</dbReference>
<dbReference type="InterPro" id="IPR018000">
    <property type="entry name" value="Neurotransmitter_ion_chnl_CS"/>
</dbReference>
<dbReference type="NCBIfam" id="TIGR00860">
    <property type="entry name" value="LIC"/>
    <property type="match status" value="1"/>
</dbReference>
<dbReference type="PANTHER" id="PTHR18945">
    <property type="entry name" value="NEUROTRANSMITTER GATED ION CHANNEL"/>
    <property type="match status" value="1"/>
</dbReference>
<dbReference type="Pfam" id="PF02931">
    <property type="entry name" value="Neur_chan_LBD"/>
    <property type="match status" value="1"/>
</dbReference>
<dbReference type="Pfam" id="PF02932">
    <property type="entry name" value="Neur_chan_memb"/>
    <property type="match status" value="1"/>
</dbReference>
<dbReference type="PRINTS" id="PR01079">
    <property type="entry name" value="GABAARALPHA"/>
</dbReference>
<dbReference type="PRINTS" id="PR01617">
    <property type="entry name" value="GABAARALPHA4"/>
</dbReference>
<dbReference type="PRINTS" id="PR00253">
    <property type="entry name" value="GABAARECEPTR"/>
</dbReference>
<dbReference type="PRINTS" id="PR00252">
    <property type="entry name" value="NRIONCHANNEL"/>
</dbReference>
<dbReference type="SUPFAM" id="SSF90112">
    <property type="entry name" value="Neurotransmitter-gated ion-channel transmembrane pore"/>
    <property type="match status" value="1"/>
</dbReference>
<dbReference type="SUPFAM" id="SSF63712">
    <property type="entry name" value="Nicotinic receptor ligand binding domain-like"/>
    <property type="match status" value="1"/>
</dbReference>
<dbReference type="PROSITE" id="PS00236">
    <property type="entry name" value="NEUROTR_ION_CHANNEL"/>
    <property type="match status" value="1"/>
</dbReference>
<proteinExistence type="evidence at protein level"/>
<evidence type="ECO:0000250" key="1">
    <source>
        <dbReference type="UniProtKB" id="P14867"/>
    </source>
</evidence>
<evidence type="ECO:0000250" key="2">
    <source>
        <dbReference type="UniProtKB" id="P28472"/>
    </source>
</evidence>
<evidence type="ECO:0000250" key="3">
    <source>
        <dbReference type="UniProtKB" id="P48169"/>
    </source>
</evidence>
<evidence type="ECO:0000250" key="4">
    <source>
        <dbReference type="UniProtKB" id="Q9D6F4"/>
    </source>
</evidence>
<evidence type="ECO:0000255" key="5"/>
<evidence type="ECO:0000256" key="6">
    <source>
        <dbReference type="SAM" id="MobiDB-lite"/>
    </source>
</evidence>
<evidence type="ECO:0000269" key="7">
    <source>
    </source>
</evidence>
<evidence type="ECO:0000303" key="8">
    <source>
    </source>
</evidence>
<evidence type="ECO:0000305" key="9"/>
<evidence type="ECO:0000312" key="10">
    <source>
        <dbReference type="RGD" id="621670"/>
    </source>
</evidence>
<evidence type="ECO:0007744" key="11">
    <source>
    </source>
</evidence>
<gene>
    <name evidence="10" type="primary">Gabra4</name>
</gene>
<protein>
    <recommendedName>
        <fullName evidence="3">Gamma-aminobutyric acid receptor subunit alpha-4</fullName>
    </recommendedName>
    <alternativeName>
        <fullName evidence="8">GABA(A) receptor subunit alpha-4</fullName>
        <shortName evidence="4">GABAAR subunit alpha-4</shortName>
    </alternativeName>
</protein>
<accession>P28471</accession>
<feature type="signal peptide" evidence="5">
    <location>
        <begin position="1"/>
        <end position="35"/>
    </location>
</feature>
<feature type="chain" id="PRO_0000000443" description="Gamma-aminobutyric acid receptor subunit alpha-4">
    <location>
        <begin position="36"/>
        <end position="552"/>
    </location>
</feature>
<feature type="topological domain" description="Extracellular" evidence="9">
    <location>
        <begin position="36"/>
        <end position="259"/>
    </location>
</feature>
<feature type="transmembrane region" description="Helical" evidence="3">
    <location>
        <begin position="260"/>
        <end position="280"/>
    </location>
</feature>
<feature type="topological domain" description="Cytoplasmic" evidence="9">
    <location>
        <begin position="281"/>
        <end position="284"/>
    </location>
</feature>
<feature type="transmembrane region" description="Helical" evidence="3">
    <location>
        <begin position="285"/>
        <end position="305"/>
    </location>
</feature>
<feature type="topological domain" description="Extracellular" evidence="9">
    <location>
        <begin position="306"/>
        <end position="318"/>
    </location>
</feature>
<feature type="transmembrane region" description="Helical" evidence="3">
    <location>
        <begin position="319"/>
        <end position="341"/>
    </location>
</feature>
<feature type="topological domain" description="Cytoplasmic" evidence="9">
    <location>
        <begin position="342"/>
        <end position="515"/>
    </location>
</feature>
<feature type="transmembrane region" description="Helical" evidence="3">
    <location>
        <begin position="516"/>
        <end position="538"/>
    </location>
</feature>
<feature type="topological domain" description="Extracellular" evidence="9">
    <location>
        <begin position="539"/>
        <end position="552"/>
    </location>
</feature>
<feature type="region of interest" description="Disordered" evidence="6">
    <location>
        <begin position="353"/>
        <end position="436"/>
    </location>
</feature>
<feature type="region of interest" description="Disordered" evidence="6">
    <location>
        <begin position="448"/>
        <end position="470"/>
    </location>
</feature>
<feature type="region of interest" description="Disordered" evidence="6">
    <location>
        <begin position="486"/>
        <end position="513"/>
    </location>
</feature>
<feature type="compositionally biased region" description="Polar residues" evidence="6">
    <location>
        <begin position="403"/>
        <end position="423"/>
    </location>
</feature>
<feature type="compositionally biased region" description="Low complexity" evidence="6">
    <location>
        <begin position="448"/>
        <end position="458"/>
    </location>
</feature>
<feature type="compositionally biased region" description="Low complexity" evidence="6">
    <location>
        <begin position="486"/>
        <end position="499"/>
    </location>
</feature>
<feature type="compositionally biased region" description="Pro residues" evidence="6">
    <location>
        <begin position="500"/>
        <end position="509"/>
    </location>
</feature>
<feature type="binding site" evidence="3">
    <location>
        <position position="100"/>
    </location>
    <ligand>
        <name>4-aminobutanoate</name>
        <dbReference type="ChEBI" id="CHEBI:59888"/>
        <note>ligand shared with the neighboring beta subunit</note>
    </ligand>
</feature>
<feature type="binding site" evidence="3">
    <location>
        <position position="163"/>
    </location>
    <ligand>
        <name>4-aminobutanoate</name>
        <dbReference type="ChEBI" id="CHEBI:59888"/>
        <note>ligand shared with the neighboring beta subunit</note>
    </ligand>
</feature>
<feature type="glycosylation site" description="N-linked (GlcNAc...) asparagine" evidence="5">
    <location>
        <position position="47"/>
    </location>
</feature>
<feature type="glycosylation site" description="N-linked (GlcNAc...) asparagine" evidence="11">
    <location>
        <position position="144"/>
    </location>
</feature>
<feature type="glycosylation site" description="N-linked (GlcNAc...) asparagine" evidence="5">
    <location>
        <position position="157"/>
    </location>
</feature>
<feature type="disulfide bond" evidence="2">
    <location>
        <begin position="172"/>
        <end position="186"/>
    </location>
</feature>
<keyword id="KW-1003">Cell membrane</keyword>
<keyword id="KW-0868">Chloride</keyword>
<keyword id="KW-0869">Chloride channel</keyword>
<keyword id="KW-1015">Disulfide bond</keyword>
<keyword id="KW-0325">Glycoprotein</keyword>
<keyword id="KW-0407">Ion channel</keyword>
<keyword id="KW-0406">Ion transport</keyword>
<keyword id="KW-1071">Ligand-gated ion channel</keyword>
<keyword id="KW-0472">Membrane</keyword>
<keyword id="KW-0628">Postsynaptic cell membrane</keyword>
<keyword id="KW-0675">Receptor</keyword>
<keyword id="KW-1185">Reference proteome</keyword>
<keyword id="KW-0732">Signal</keyword>
<keyword id="KW-0770">Synapse</keyword>
<keyword id="KW-0812">Transmembrane</keyword>
<keyword id="KW-1133">Transmembrane helix</keyword>
<keyword id="KW-0813">Transport</keyword>
<reference key="1">
    <citation type="journal article" date="1991" name="FEBS Lett.">
        <title>Cloning, pharmacological characteristics and expression pattern of the rat GABAA receptor alpha 4 subunit.</title>
        <authorList>
            <person name="Wisden W."/>
            <person name="Herb A."/>
            <person name="Wieland H."/>
            <person name="Keinaenen K."/>
            <person name="Lueddens H."/>
            <person name="Seeburg P.H."/>
        </authorList>
    </citation>
    <scope>NUCLEOTIDE SEQUENCE [MRNA]</scope>
    <scope>TISSUE SPECIFICITY</scope>
</reference>
<reference key="2">
    <citation type="journal article" date="2013" name="J. Proteome Res.">
        <title>Site-specific glycan-peptide analysis for determination of N-glycoproteome heterogeneity.</title>
        <authorList>
            <person name="Parker B.L."/>
            <person name="Thaysen-Andersen M."/>
            <person name="Solis N."/>
            <person name="Scott N.E."/>
            <person name="Larsen M.R."/>
            <person name="Graham M.E."/>
            <person name="Packer N.H."/>
            <person name="Cordwell S.J."/>
        </authorList>
    </citation>
    <scope>GLYCOSYLATION [LARGE SCALE ANALYSIS] AT ASN-144</scope>
    <scope>IDENTIFICATION BY MASS SPECTROMETRY [LARGE SCALE ANALYSIS]</scope>
    <source>
        <tissue>Brain</tissue>
    </source>
</reference>
<name>GBRA4_RAT</name>
<comment type="function">
    <text evidence="3 4">Alpha subunit of the heteropentameric ligand-gated chloride channel gated by gamma-aminobutyric acid (GABA), a major inhibitory neurotransmitter in the brain (By similarity). GABA-gated chloride channels, also named GABA(A) receptors (GABAAR), consist of five subunits arranged around a central pore and contain GABA active binding site(s) located at the alpha and beta subunit interface(s) (By similarity). Alpha-4/GABRA4 subunit often assembles with delta or gamma-2 subunits, in combination with beta subunits (By similarity). When activated by GABA, GABAARs selectively allow the flow of chloride anions across the cell membrane down their electrochemical gradient (By similarity). GABAARs containing alpha-4 are predominantly extrasynaptic, contributing to tonic inhibition in dentate granule cells and thalamic relay neurons (By similarity). Extrasynaptic alpha-4-containing GABAARs control levels of excitability and network activity (By similarity). GABAAR containing alpha-4-beta-3-delta subunits can simultaneously bind GABA and histamine where histamine binds at the interface of two neighboring beta subunits, which may be involved in the regulation of sleep and wakefulness (By similarity).</text>
</comment>
<comment type="activity regulation">
    <text evidence="3">Potentiated by histamine.</text>
</comment>
<comment type="subunit">
    <text evidence="3">Heteropentamer, formed by a combination of alpha (GABRA1-6), beta (GABRB1-3), gamma (GABRG1-3), delta (GABRD), epsilon (GABRE), rho (GABRR1-3), pi (GABRP) and theta (GABRQ) chains, each subunit exhibiting distinct physiological and pharmacological properties.</text>
</comment>
<comment type="subcellular location">
    <subcellularLocation>
        <location evidence="4">Cell membrane</location>
        <topology evidence="3">Multi-pass membrane protein</topology>
    </subcellularLocation>
    <subcellularLocation>
        <location>Postsynaptic cell membrane</location>
        <topology evidence="3">Multi-pass membrane protein</topology>
    </subcellularLocation>
</comment>
<comment type="tissue specificity">
    <text evidence="7">Expressed in the brain.</text>
</comment>
<comment type="domain">
    <text evidence="3">The GABA-binding pockets are located at the interface between neighboring alpha and beta subunits.</text>
</comment>
<comment type="domain">
    <text evidence="1">GABAARs subunits share a common topological structure: a peptide sequence made up of a long extracellular N-terminal, four transmembrane domains, intracellular or cytoplasmic domain located between the third and the fourth transmembrane domains.</text>
</comment>
<comment type="similarity">
    <text evidence="9">Belongs to the ligand-gated ion channel (TC 1.A.9) family. Gamma-aminobutyric acid receptor (TC 1.A.9.5) subfamily. GABRA4 sub-subfamily.</text>
</comment>